<name>SYI_METTP</name>
<sequence length="1049" mass="121605">MIVEVPGQYNPKNVEDEVREFWHREDTYHKVRRLRSGGRRFFFVDGPPYTTGRIHLGTAWNKVIKDSILRYMSMRGYDLKDRAGWDMHGLPIEVKVEEHLGFRSKRDIESYGVDRFIEQCKSFALRQKDEMTEQFKSLGVWLDWDNPYMTLKNEYIEAAWWTLKRAHERGLLERGLRVVNWCPRCQTAIADSEVEYWDESDPSIYVKFPVEGEDNTYIVIWTTTPWTIPANVAVAVHKDFMYSKVRAWRRDGTYEILIMATDLIENVLKQGRYVDYEILESMRGEDLLSLTYKNPLQDLVPAQRDIVHRVHLADFVTAENTGIVHIAPGHGLEDYELGLEKRLPIFCPVGEDGRYTSEAGKKYEGKYVRDANPEVVEDLMERGALLASGELVHRYGHCWRCKTPIIFIATRQWFIGISELRDQMLKEIERVSWYPDWAGSARFKDWISNARDWCISRQRYWGIPLPIWICRSCGAMDVIGTAAELEARAGRPVEDLHRPAVDDVRLRCSCGGAMERVPDVFDVWFDSAVASWATLNFPRDEEEFRVWWPADFITEGHDQTRGWFYSQLGASMVAFGRAPYKSVLMHGFTLDEQGRKMSKSIGNVVHPEDVVERYGADTLRFYVLSSNAPWEDLHFSWEGAMNVNRMLNILWNAYRFPLPYMVLDRFDISKADTSKYDLRPEDRWIISRVNSLAKEIEENMSGYMLHRATRSLQEFVLEDLSRWYIQLVRPRTWIETEDPDKLAAYATLYNVMSTLVKLMAPFTPFLAESIYQNLVRGLDPSAPESVHMCDWPGYREDLIDKGLEESMSYVREISEAAANARQKGGRKLRWPVSRIIIASDEQLDLRDLLHVLRTQTNSKEVIILPPGEKPEMNLEISVVQKKIGPVFKGESRDVVEALTSMNPKEVKRIIESGEPLEWKGRSYMITEEMVEFREIPPANLIPAEFSKGTVYVDVSLTDELRAEGYAREIIRRIQDMRKDLDLKVDEMIRVSVALNSNEVVDLVSGWRDYISSEVRATLLRIGNDLDLEGELTKDWEVDGVKIRVSVARA</sequence>
<organism>
    <name type="scientific">Methanothrix thermoacetophila (strain DSM 6194 / JCM 14653 / NBRC 101360 / PT)</name>
    <name type="common">Methanosaeta thermophila</name>
    <dbReference type="NCBI Taxonomy" id="349307"/>
    <lineage>
        <taxon>Archaea</taxon>
        <taxon>Methanobacteriati</taxon>
        <taxon>Methanobacteriota</taxon>
        <taxon>Stenosarchaea group</taxon>
        <taxon>Methanomicrobia</taxon>
        <taxon>Methanotrichales</taxon>
        <taxon>Methanotrichaceae</taxon>
        <taxon>Methanothrix</taxon>
    </lineage>
</organism>
<evidence type="ECO:0000255" key="1">
    <source>
        <dbReference type="HAMAP-Rule" id="MF_02003"/>
    </source>
</evidence>
<feature type="chain" id="PRO_1000022157" description="Isoleucine--tRNA ligase">
    <location>
        <begin position="1"/>
        <end position="1049"/>
    </location>
</feature>
<feature type="short sequence motif" description="'HIGH' region">
    <location>
        <begin position="48"/>
        <end position="58"/>
    </location>
</feature>
<feature type="short sequence motif" description="'KMSKS' region">
    <location>
        <begin position="596"/>
        <end position="600"/>
    </location>
</feature>
<feature type="binding site" evidence="1">
    <location>
        <position position="599"/>
    </location>
    <ligand>
        <name>ATP</name>
        <dbReference type="ChEBI" id="CHEBI:30616"/>
    </ligand>
</feature>
<dbReference type="EC" id="6.1.1.5" evidence="1"/>
<dbReference type="EMBL" id="CP000477">
    <property type="protein sequence ID" value="ABK14717.1"/>
    <property type="molecule type" value="Genomic_DNA"/>
</dbReference>
<dbReference type="RefSeq" id="WP_011696112.1">
    <property type="nucleotide sequence ID" value="NC_008553.1"/>
</dbReference>
<dbReference type="SMR" id="A0B7P3"/>
<dbReference type="STRING" id="349307.Mthe_0929"/>
<dbReference type="GeneID" id="4463322"/>
<dbReference type="KEGG" id="mtp:Mthe_0929"/>
<dbReference type="HOGENOM" id="CLU_001493_1_1_2"/>
<dbReference type="OrthoDB" id="30823at2157"/>
<dbReference type="Proteomes" id="UP000000674">
    <property type="component" value="Chromosome"/>
</dbReference>
<dbReference type="GO" id="GO:0005737">
    <property type="term" value="C:cytoplasm"/>
    <property type="evidence" value="ECO:0007669"/>
    <property type="project" value="UniProtKB-SubCell"/>
</dbReference>
<dbReference type="GO" id="GO:0002161">
    <property type="term" value="F:aminoacyl-tRNA deacylase activity"/>
    <property type="evidence" value="ECO:0007669"/>
    <property type="project" value="InterPro"/>
</dbReference>
<dbReference type="GO" id="GO:0005524">
    <property type="term" value="F:ATP binding"/>
    <property type="evidence" value="ECO:0007669"/>
    <property type="project" value="UniProtKB-UniRule"/>
</dbReference>
<dbReference type="GO" id="GO:0004822">
    <property type="term" value="F:isoleucine-tRNA ligase activity"/>
    <property type="evidence" value="ECO:0007669"/>
    <property type="project" value="UniProtKB-UniRule"/>
</dbReference>
<dbReference type="GO" id="GO:0000049">
    <property type="term" value="F:tRNA binding"/>
    <property type="evidence" value="ECO:0007669"/>
    <property type="project" value="InterPro"/>
</dbReference>
<dbReference type="GO" id="GO:0008270">
    <property type="term" value="F:zinc ion binding"/>
    <property type="evidence" value="ECO:0007669"/>
    <property type="project" value="UniProtKB-UniRule"/>
</dbReference>
<dbReference type="GO" id="GO:0006428">
    <property type="term" value="P:isoleucyl-tRNA aminoacylation"/>
    <property type="evidence" value="ECO:0007669"/>
    <property type="project" value="UniProtKB-UniRule"/>
</dbReference>
<dbReference type="CDD" id="cd07961">
    <property type="entry name" value="Anticodon_Ia_Ile_ABEc"/>
    <property type="match status" value="1"/>
</dbReference>
<dbReference type="CDD" id="cd00818">
    <property type="entry name" value="IleRS_core"/>
    <property type="match status" value="1"/>
</dbReference>
<dbReference type="FunFam" id="3.40.50.620:FF:000286">
    <property type="entry name" value="Isoleucine--tRNA ligase"/>
    <property type="match status" value="1"/>
</dbReference>
<dbReference type="FunFam" id="1.10.730.10:FF:000033">
    <property type="entry name" value="Valine--tRNA ligase"/>
    <property type="match status" value="1"/>
</dbReference>
<dbReference type="Gene3D" id="3.40.50.620">
    <property type="entry name" value="HUPs"/>
    <property type="match status" value="2"/>
</dbReference>
<dbReference type="Gene3D" id="1.10.730.10">
    <property type="entry name" value="Isoleucyl-tRNA Synthetase, Domain 1"/>
    <property type="match status" value="1"/>
</dbReference>
<dbReference type="Gene3D" id="3.90.740.10">
    <property type="entry name" value="Valyl/Leucyl/Isoleucyl-tRNA synthetase, editing domain"/>
    <property type="match status" value="1"/>
</dbReference>
<dbReference type="HAMAP" id="MF_02003">
    <property type="entry name" value="Ile_tRNA_synth_type2"/>
    <property type="match status" value="1"/>
</dbReference>
<dbReference type="InterPro" id="IPR001412">
    <property type="entry name" value="aa-tRNA-synth_I_CS"/>
</dbReference>
<dbReference type="InterPro" id="IPR002300">
    <property type="entry name" value="aa-tRNA-synth_Ia"/>
</dbReference>
<dbReference type="InterPro" id="IPR033709">
    <property type="entry name" value="Anticodon_Ile_ABEc"/>
</dbReference>
<dbReference type="InterPro" id="IPR002301">
    <property type="entry name" value="Ile-tRNA-ligase"/>
</dbReference>
<dbReference type="InterPro" id="IPR023586">
    <property type="entry name" value="Ile-tRNA-ligase_type2"/>
</dbReference>
<dbReference type="InterPro" id="IPR013155">
    <property type="entry name" value="M/V/L/I-tRNA-synth_anticd-bd"/>
</dbReference>
<dbReference type="InterPro" id="IPR014729">
    <property type="entry name" value="Rossmann-like_a/b/a_fold"/>
</dbReference>
<dbReference type="InterPro" id="IPR009080">
    <property type="entry name" value="tRNAsynth_Ia_anticodon-bd"/>
</dbReference>
<dbReference type="InterPro" id="IPR009008">
    <property type="entry name" value="Val/Leu/Ile-tRNA-synth_edit"/>
</dbReference>
<dbReference type="NCBIfam" id="TIGR00392">
    <property type="entry name" value="ileS"/>
    <property type="match status" value="1"/>
</dbReference>
<dbReference type="PANTHER" id="PTHR42780:SF1">
    <property type="entry name" value="ISOLEUCINE--TRNA LIGASE, CYTOPLASMIC"/>
    <property type="match status" value="1"/>
</dbReference>
<dbReference type="PANTHER" id="PTHR42780">
    <property type="entry name" value="SOLEUCYL-TRNA SYNTHETASE"/>
    <property type="match status" value="1"/>
</dbReference>
<dbReference type="Pfam" id="PF08264">
    <property type="entry name" value="Anticodon_1"/>
    <property type="match status" value="1"/>
</dbReference>
<dbReference type="Pfam" id="PF19302">
    <property type="entry name" value="DUF5915"/>
    <property type="match status" value="1"/>
</dbReference>
<dbReference type="Pfam" id="PF00133">
    <property type="entry name" value="tRNA-synt_1"/>
    <property type="match status" value="1"/>
</dbReference>
<dbReference type="PRINTS" id="PR00984">
    <property type="entry name" value="TRNASYNTHILE"/>
</dbReference>
<dbReference type="SUPFAM" id="SSF47323">
    <property type="entry name" value="Anticodon-binding domain of a subclass of class I aminoacyl-tRNA synthetases"/>
    <property type="match status" value="2"/>
</dbReference>
<dbReference type="SUPFAM" id="SSF52374">
    <property type="entry name" value="Nucleotidylyl transferase"/>
    <property type="match status" value="1"/>
</dbReference>
<dbReference type="SUPFAM" id="SSF50677">
    <property type="entry name" value="ValRS/IleRS/LeuRS editing domain"/>
    <property type="match status" value="1"/>
</dbReference>
<dbReference type="PROSITE" id="PS00178">
    <property type="entry name" value="AA_TRNA_LIGASE_I"/>
    <property type="match status" value="1"/>
</dbReference>
<keyword id="KW-0030">Aminoacyl-tRNA synthetase</keyword>
<keyword id="KW-0067">ATP-binding</keyword>
<keyword id="KW-0963">Cytoplasm</keyword>
<keyword id="KW-0436">Ligase</keyword>
<keyword id="KW-0479">Metal-binding</keyword>
<keyword id="KW-0547">Nucleotide-binding</keyword>
<keyword id="KW-0648">Protein biosynthesis</keyword>
<keyword id="KW-1185">Reference proteome</keyword>
<keyword id="KW-0862">Zinc</keyword>
<accession>A0B7P3</accession>
<proteinExistence type="inferred from homology"/>
<gene>
    <name evidence="1" type="primary">ileS</name>
    <name type="ordered locus">Mthe_0929</name>
</gene>
<protein>
    <recommendedName>
        <fullName evidence="1">Isoleucine--tRNA ligase</fullName>
        <ecNumber evidence="1">6.1.1.5</ecNumber>
    </recommendedName>
    <alternativeName>
        <fullName evidence="1">Isoleucyl-tRNA synthetase</fullName>
        <shortName evidence="1">IleRS</shortName>
    </alternativeName>
</protein>
<reference key="1">
    <citation type="submission" date="2006-10" db="EMBL/GenBank/DDBJ databases">
        <title>Complete sequence of Methanosaeta thermophila PT.</title>
        <authorList>
            <consortium name="US DOE Joint Genome Institute"/>
            <person name="Copeland A."/>
            <person name="Lucas S."/>
            <person name="Lapidus A."/>
            <person name="Barry K."/>
            <person name="Detter J.C."/>
            <person name="Glavina del Rio T."/>
            <person name="Hammon N."/>
            <person name="Israni S."/>
            <person name="Pitluck S."/>
            <person name="Chain P."/>
            <person name="Malfatti S."/>
            <person name="Shin M."/>
            <person name="Vergez L."/>
            <person name="Schmutz J."/>
            <person name="Larimer F."/>
            <person name="Land M."/>
            <person name="Hauser L."/>
            <person name="Kyrpides N."/>
            <person name="Kim E."/>
            <person name="Smith K.S."/>
            <person name="Ingram-Smith C."/>
            <person name="Richardson P."/>
        </authorList>
    </citation>
    <scope>NUCLEOTIDE SEQUENCE [LARGE SCALE GENOMIC DNA]</scope>
    <source>
        <strain>DSM 6194 / JCM 14653 / NBRC 101360 / PT</strain>
    </source>
</reference>
<comment type="function">
    <text evidence="1">Catalyzes the attachment of isoleucine to tRNA(Ile). As IleRS can inadvertently accommodate and process structurally similar amino acids such as valine, to avoid such errors it has two additional distinct tRNA(Ile)-dependent editing activities. One activity is designated as 'pretransfer' editing and involves the hydrolysis of activated Val-AMP. The other activity is designated 'posttransfer' editing and involves deacylation of mischarged Val-tRNA(Ile).</text>
</comment>
<comment type="catalytic activity">
    <reaction evidence="1">
        <text>tRNA(Ile) + L-isoleucine + ATP = L-isoleucyl-tRNA(Ile) + AMP + diphosphate</text>
        <dbReference type="Rhea" id="RHEA:11060"/>
        <dbReference type="Rhea" id="RHEA-COMP:9666"/>
        <dbReference type="Rhea" id="RHEA-COMP:9695"/>
        <dbReference type="ChEBI" id="CHEBI:30616"/>
        <dbReference type="ChEBI" id="CHEBI:33019"/>
        <dbReference type="ChEBI" id="CHEBI:58045"/>
        <dbReference type="ChEBI" id="CHEBI:78442"/>
        <dbReference type="ChEBI" id="CHEBI:78528"/>
        <dbReference type="ChEBI" id="CHEBI:456215"/>
        <dbReference type="EC" id="6.1.1.5"/>
    </reaction>
</comment>
<comment type="cofactor">
    <cofactor evidence="1">
        <name>Zn(2+)</name>
        <dbReference type="ChEBI" id="CHEBI:29105"/>
    </cofactor>
</comment>
<comment type="subunit">
    <text evidence="1">Monomer.</text>
</comment>
<comment type="subcellular location">
    <subcellularLocation>
        <location evidence="1">Cytoplasm</location>
    </subcellularLocation>
</comment>
<comment type="domain">
    <text evidence="1">IleRS has two distinct active sites: one for aminoacylation and one for editing. The misactivated valine is translocated from the active site to the editing site, which sterically excludes the correctly activated isoleucine. The single editing site contains two valyl binding pockets, one specific for each substrate (Val-AMP or Val-tRNA(Ile)).</text>
</comment>
<comment type="similarity">
    <text evidence="1">Belongs to the class-I aminoacyl-tRNA synthetase family. IleS type 2 subfamily.</text>
</comment>